<dbReference type="EMBL" id="AE014298">
    <property type="protein sequence ID" value="AAF45624.3"/>
    <property type="molecule type" value="Genomic_DNA"/>
</dbReference>
<dbReference type="EMBL" id="AL035632">
    <property type="protein sequence ID" value="CAB38469.1"/>
    <property type="molecule type" value="Genomic_DNA"/>
</dbReference>
<dbReference type="RefSeq" id="NP_001162633.1">
    <molecule id="Q9W594-1"/>
    <property type="nucleotide sequence ID" value="NM_001169162.2"/>
</dbReference>
<dbReference type="RefSeq" id="NP_525038.3">
    <molecule id="Q9W594-2"/>
    <property type="nucleotide sequence ID" value="NM_080299.4"/>
</dbReference>
<dbReference type="SMR" id="Q9W594"/>
<dbReference type="BioGRID" id="57650">
    <property type="interactions" value="3"/>
</dbReference>
<dbReference type="DIP" id="DIP-22899N"/>
<dbReference type="FunCoup" id="Q9W594">
    <property type="interactions" value="27"/>
</dbReference>
<dbReference type="IntAct" id="Q9W594">
    <property type="interactions" value="6"/>
</dbReference>
<dbReference type="STRING" id="7227.FBpp0289461"/>
<dbReference type="TCDB" id="1.A.69.3.4">
    <property type="family name" value="the heteromeric odorant receptor channel (horc) family"/>
</dbReference>
<dbReference type="GlyCosmos" id="Q9W594">
    <property type="glycosylation" value="2 sites, No reported glycans"/>
</dbReference>
<dbReference type="GlyGen" id="Q9W594">
    <property type="glycosylation" value="2 sites"/>
</dbReference>
<dbReference type="PaxDb" id="7227-FBpp0289461"/>
<dbReference type="DNASU" id="31093"/>
<dbReference type="EnsemblMetazoa" id="FBtr0114515">
    <molecule id="Q9W594-2"/>
    <property type="protein sequence ID" value="FBpp0113007"/>
    <property type="gene ID" value="FBgn0265139"/>
</dbReference>
<dbReference type="EnsemblMetazoa" id="FBtr0300224">
    <molecule id="Q9W594-1"/>
    <property type="protein sequence ID" value="FBpp0289461"/>
    <property type="gene ID" value="FBgn0265139"/>
</dbReference>
<dbReference type="GeneID" id="31093"/>
<dbReference type="KEGG" id="dme:Dmel_CG18531"/>
<dbReference type="AGR" id="FB:FBgn0265139"/>
<dbReference type="CTD" id="31093"/>
<dbReference type="FlyBase" id="FBgn0265139">
    <property type="gene designation" value="Gr2a"/>
</dbReference>
<dbReference type="VEuPathDB" id="VectorBase:FBgn0265139"/>
<dbReference type="eggNOG" id="ENOG502T2FZ">
    <property type="taxonomic scope" value="Eukaryota"/>
</dbReference>
<dbReference type="GeneTree" id="ENSGT00940000166130"/>
<dbReference type="HOGENOM" id="CLU_678378_0_0_1"/>
<dbReference type="InParanoid" id="Q9W594"/>
<dbReference type="OMA" id="CNLWQWR"/>
<dbReference type="OrthoDB" id="6478931at2759"/>
<dbReference type="PhylomeDB" id="Q9W594"/>
<dbReference type="SignaLink" id="Q9W594"/>
<dbReference type="BioGRID-ORCS" id="31093">
    <property type="hits" value="0 hits in 1 CRISPR screen"/>
</dbReference>
<dbReference type="GenomeRNAi" id="31093"/>
<dbReference type="PRO" id="PR:Q9W594"/>
<dbReference type="Proteomes" id="UP000000803">
    <property type="component" value="Chromosome X"/>
</dbReference>
<dbReference type="Bgee" id="FBgn0265139">
    <property type="expression patterns" value="Expressed in adult posterior midgut class II enteroendocrine cell in adult midgut (Drosophila) and 2 other cell types or tissues"/>
</dbReference>
<dbReference type="ExpressionAtlas" id="Q9W594">
    <property type="expression patterns" value="baseline"/>
</dbReference>
<dbReference type="GO" id="GO:0030424">
    <property type="term" value="C:axon"/>
    <property type="evidence" value="ECO:0000318"/>
    <property type="project" value="GO_Central"/>
</dbReference>
<dbReference type="GO" id="GO:0030425">
    <property type="term" value="C:dendrite"/>
    <property type="evidence" value="ECO:0000318"/>
    <property type="project" value="GO_Central"/>
</dbReference>
<dbReference type="GO" id="GO:0016020">
    <property type="term" value="C:membrane"/>
    <property type="evidence" value="ECO:0000303"/>
    <property type="project" value="UniProtKB"/>
</dbReference>
<dbReference type="GO" id="GO:0043025">
    <property type="term" value="C:neuronal cell body"/>
    <property type="evidence" value="ECO:0000318"/>
    <property type="project" value="GO_Central"/>
</dbReference>
<dbReference type="GO" id="GO:0005886">
    <property type="term" value="C:plasma membrane"/>
    <property type="evidence" value="ECO:0000250"/>
    <property type="project" value="FlyBase"/>
</dbReference>
<dbReference type="GO" id="GO:0004930">
    <property type="term" value="F:G protein-coupled receptor activity"/>
    <property type="evidence" value="ECO:0000250"/>
    <property type="project" value="FlyBase"/>
</dbReference>
<dbReference type="GO" id="GO:0015276">
    <property type="term" value="F:ligand-gated monoatomic ion channel activity"/>
    <property type="evidence" value="ECO:0000250"/>
    <property type="project" value="FlyBase"/>
</dbReference>
<dbReference type="GO" id="GO:0008527">
    <property type="term" value="F:taste receptor activity"/>
    <property type="evidence" value="ECO:0000250"/>
    <property type="project" value="FlyBase"/>
</dbReference>
<dbReference type="GO" id="GO:0007635">
    <property type="term" value="P:chemosensory behavior"/>
    <property type="evidence" value="ECO:0000318"/>
    <property type="project" value="GO_Central"/>
</dbReference>
<dbReference type="GO" id="GO:0050912">
    <property type="term" value="P:detection of chemical stimulus involved in sensory perception of taste"/>
    <property type="evidence" value="ECO:0000303"/>
    <property type="project" value="UniProtKB"/>
</dbReference>
<dbReference type="GO" id="GO:0008049">
    <property type="term" value="P:male courtship behavior"/>
    <property type="evidence" value="ECO:0000318"/>
    <property type="project" value="GO_Central"/>
</dbReference>
<dbReference type="GO" id="GO:0034220">
    <property type="term" value="P:monoatomic ion transmembrane transport"/>
    <property type="evidence" value="ECO:0000250"/>
    <property type="project" value="FlyBase"/>
</dbReference>
<dbReference type="GO" id="GO:0050909">
    <property type="term" value="P:sensory perception of taste"/>
    <property type="evidence" value="ECO:0000250"/>
    <property type="project" value="FlyBase"/>
</dbReference>
<dbReference type="InterPro" id="IPR013604">
    <property type="entry name" value="7TM_chemorcpt"/>
</dbReference>
<dbReference type="PANTHER" id="PTHR21143:SF104">
    <property type="entry name" value="GUSTATORY RECEPTOR 8A-RELATED"/>
    <property type="match status" value="1"/>
</dbReference>
<dbReference type="PANTHER" id="PTHR21143">
    <property type="entry name" value="INVERTEBRATE GUSTATORY RECEPTOR"/>
    <property type="match status" value="1"/>
</dbReference>
<dbReference type="Pfam" id="PF08395">
    <property type="entry name" value="7tm_7"/>
    <property type="match status" value="2"/>
</dbReference>
<name>GR02A_DROME</name>
<organism>
    <name type="scientific">Drosophila melanogaster</name>
    <name type="common">Fruit fly</name>
    <dbReference type="NCBI Taxonomy" id="7227"/>
    <lineage>
        <taxon>Eukaryota</taxon>
        <taxon>Metazoa</taxon>
        <taxon>Ecdysozoa</taxon>
        <taxon>Arthropoda</taxon>
        <taxon>Hexapoda</taxon>
        <taxon>Insecta</taxon>
        <taxon>Pterygota</taxon>
        <taxon>Neoptera</taxon>
        <taxon>Endopterygota</taxon>
        <taxon>Diptera</taxon>
        <taxon>Brachycera</taxon>
        <taxon>Muscomorpha</taxon>
        <taxon>Ephydroidea</taxon>
        <taxon>Drosophilidae</taxon>
        <taxon>Drosophila</taxon>
        <taxon>Sophophora</taxon>
    </lineage>
</organism>
<gene>
    <name type="primary">Gr2a</name>
    <name type="ORF">CG18531</name>
</gene>
<evidence type="ECO:0000250" key="1"/>
<evidence type="ECO:0000255" key="2"/>
<evidence type="ECO:0000269" key="3">
    <source>
    </source>
</evidence>
<evidence type="ECO:0000305" key="4"/>
<reference key="1">
    <citation type="journal article" date="2000" name="Science">
        <title>The genome sequence of Drosophila melanogaster.</title>
        <authorList>
            <person name="Adams M.D."/>
            <person name="Celniker S.E."/>
            <person name="Holt R.A."/>
            <person name="Evans C.A."/>
            <person name="Gocayne J.D."/>
            <person name="Amanatides P.G."/>
            <person name="Scherer S.E."/>
            <person name="Li P.W."/>
            <person name="Hoskins R.A."/>
            <person name="Galle R.F."/>
            <person name="George R.A."/>
            <person name="Lewis S.E."/>
            <person name="Richards S."/>
            <person name="Ashburner M."/>
            <person name="Henderson S.N."/>
            <person name="Sutton G.G."/>
            <person name="Wortman J.R."/>
            <person name="Yandell M.D."/>
            <person name="Zhang Q."/>
            <person name="Chen L.X."/>
            <person name="Brandon R.C."/>
            <person name="Rogers Y.-H.C."/>
            <person name="Blazej R.G."/>
            <person name="Champe M."/>
            <person name="Pfeiffer B.D."/>
            <person name="Wan K.H."/>
            <person name="Doyle C."/>
            <person name="Baxter E.G."/>
            <person name="Helt G."/>
            <person name="Nelson C.R."/>
            <person name="Miklos G.L.G."/>
            <person name="Abril J.F."/>
            <person name="Agbayani A."/>
            <person name="An H.-J."/>
            <person name="Andrews-Pfannkoch C."/>
            <person name="Baldwin D."/>
            <person name="Ballew R.M."/>
            <person name="Basu A."/>
            <person name="Baxendale J."/>
            <person name="Bayraktaroglu L."/>
            <person name="Beasley E.M."/>
            <person name="Beeson K.Y."/>
            <person name="Benos P.V."/>
            <person name="Berman B.P."/>
            <person name="Bhandari D."/>
            <person name="Bolshakov S."/>
            <person name="Borkova D."/>
            <person name="Botchan M.R."/>
            <person name="Bouck J."/>
            <person name="Brokstein P."/>
            <person name="Brottier P."/>
            <person name="Burtis K.C."/>
            <person name="Busam D.A."/>
            <person name="Butler H."/>
            <person name="Cadieu E."/>
            <person name="Center A."/>
            <person name="Chandra I."/>
            <person name="Cherry J.M."/>
            <person name="Cawley S."/>
            <person name="Dahlke C."/>
            <person name="Davenport L.B."/>
            <person name="Davies P."/>
            <person name="de Pablos B."/>
            <person name="Delcher A."/>
            <person name="Deng Z."/>
            <person name="Mays A.D."/>
            <person name="Dew I."/>
            <person name="Dietz S.M."/>
            <person name="Dodson K."/>
            <person name="Doup L.E."/>
            <person name="Downes M."/>
            <person name="Dugan-Rocha S."/>
            <person name="Dunkov B.C."/>
            <person name="Dunn P."/>
            <person name="Durbin K.J."/>
            <person name="Evangelista C.C."/>
            <person name="Ferraz C."/>
            <person name="Ferriera S."/>
            <person name="Fleischmann W."/>
            <person name="Fosler C."/>
            <person name="Gabrielian A.E."/>
            <person name="Garg N.S."/>
            <person name="Gelbart W.M."/>
            <person name="Glasser K."/>
            <person name="Glodek A."/>
            <person name="Gong F."/>
            <person name="Gorrell J.H."/>
            <person name="Gu Z."/>
            <person name="Guan P."/>
            <person name="Harris M."/>
            <person name="Harris N.L."/>
            <person name="Harvey D.A."/>
            <person name="Heiman T.J."/>
            <person name="Hernandez J.R."/>
            <person name="Houck J."/>
            <person name="Hostin D."/>
            <person name="Houston K.A."/>
            <person name="Howland T.J."/>
            <person name="Wei M.-H."/>
            <person name="Ibegwam C."/>
            <person name="Jalali M."/>
            <person name="Kalush F."/>
            <person name="Karpen G.H."/>
            <person name="Ke Z."/>
            <person name="Kennison J.A."/>
            <person name="Ketchum K.A."/>
            <person name="Kimmel B.E."/>
            <person name="Kodira C.D."/>
            <person name="Kraft C.L."/>
            <person name="Kravitz S."/>
            <person name="Kulp D."/>
            <person name="Lai Z."/>
            <person name="Lasko P."/>
            <person name="Lei Y."/>
            <person name="Levitsky A.A."/>
            <person name="Li J.H."/>
            <person name="Li Z."/>
            <person name="Liang Y."/>
            <person name="Lin X."/>
            <person name="Liu X."/>
            <person name="Mattei B."/>
            <person name="McIntosh T.C."/>
            <person name="McLeod M.P."/>
            <person name="McPherson D."/>
            <person name="Merkulov G."/>
            <person name="Milshina N.V."/>
            <person name="Mobarry C."/>
            <person name="Morris J."/>
            <person name="Moshrefi A."/>
            <person name="Mount S.M."/>
            <person name="Moy M."/>
            <person name="Murphy B."/>
            <person name="Murphy L."/>
            <person name="Muzny D.M."/>
            <person name="Nelson D.L."/>
            <person name="Nelson D.R."/>
            <person name="Nelson K.A."/>
            <person name="Nixon K."/>
            <person name="Nusskern D.R."/>
            <person name="Pacleb J.M."/>
            <person name="Palazzolo M."/>
            <person name="Pittman G.S."/>
            <person name="Pan S."/>
            <person name="Pollard J."/>
            <person name="Puri V."/>
            <person name="Reese M.G."/>
            <person name="Reinert K."/>
            <person name="Remington K."/>
            <person name="Saunders R.D.C."/>
            <person name="Scheeler F."/>
            <person name="Shen H."/>
            <person name="Shue B.C."/>
            <person name="Siden-Kiamos I."/>
            <person name="Simpson M."/>
            <person name="Skupski M.P."/>
            <person name="Smith T.J."/>
            <person name="Spier E."/>
            <person name="Spradling A.C."/>
            <person name="Stapleton M."/>
            <person name="Strong R."/>
            <person name="Sun E."/>
            <person name="Svirskas R."/>
            <person name="Tector C."/>
            <person name="Turner R."/>
            <person name="Venter E."/>
            <person name="Wang A.H."/>
            <person name="Wang X."/>
            <person name="Wang Z.-Y."/>
            <person name="Wassarman D.A."/>
            <person name="Weinstock G.M."/>
            <person name="Weissenbach J."/>
            <person name="Williams S.M."/>
            <person name="Woodage T."/>
            <person name="Worley K.C."/>
            <person name="Wu D."/>
            <person name="Yang S."/>
            <person name="Yao Q.A."/>
            <person name="Ye J."/>
            <person name="Yeh R.-F."/>
            <person name="Zaveri J.S."/>
            <person name="Zhan M."/>
            <person name="Zhang G."/>
            <person name="Zhao Q."/>
            <person name="Zheng L."/>
            <person name="Zheng X.H."/>
            <person name="Zhong F.N."/>
            <person name="Zhong W."/>
            <person name="Zhou X."/>
            <person name="Zhu S.C."/>
            <person name="Zhu X."/>
            <person name="Smith H.O."/>
            <person name="Gibbs R.A."/>
            <person name="Myers E.W."/>
            <person name="Rubin G.M."/>
            <person name="Venter J.C."/>
        </authorList>
    </citation>
    <scope>NUCLEOTIDE SEQUENCE [LARGE SCALE GENOMIC DNA]</scope>
    <source>
        <strain>Berkeley</strain>
    </source>
</reference>
<reference key="2">
    <citation type="journal article" date="2002" name="Genome Biol.">
        <title>Annotation of the Drosophila melanogaster euchromatic genome: a systematic review.</title>
        <authorList>
            <person name="Misra S."/>
            <person name="Crosby M.A."/>
            <person name="Mungall C.J."/>
            <person name="Matthews B.B."/>
            <person name="Campbell K.S."/>
            <person name="Hradecky P."/>
            <person name="Huang Y."/>
            <person name="Kaminker J.S."/>
            <person name="Millburn G.H."/>
            <person name="Prochnik S.E."/>
            <person name="Smith C.D."/>
            <person name="Tupy J.L."/>
            <person name="Whitfield E.J."/>
            <person name="Bayraktaroglu L."/>
            <person name="Berman B.P."/>
            <person name="Bettencourt B.R."/>
            <person name="Celniker S.E."/>
            <person name="de Grey A.D.N.J."/>
            <person name="Drysdale R.A."/>
            <person name="Harris N.L."/>
            <person name="Richter J."/>
            <person name="Russo S."/>
            <person name="Schroeder A.J."/>
            <person name="Shu S.Q."/>
            <person name="Stapleton M."/>
            <person name="Yamada C."/>
            <person name="Ashburner M."/>
            <person name="Gelbart W.M."/>
            <person name="Rubin G.M."/>
            <person name="Lewis S.E."/>
        </authorList>
    </citation>
    <scope>GENOME REANNOTATION</scope>
    <source>
        <strain>Berkeley</strain>
    </source>
</reference>
<reference key="3">
    <citation type="journal article" date="2000" name="Science">
        <title>From sequence to chromosome: the tip of the X chromosome of D. melanogaster.</title>
        <authorList>
            <person name="Benos P.V."/>
            <person name="Gatt M.K."/>
            <person name="Ashburner M."/>
            <person name="Murphy L."/>
            <person name="Harris D."/>
            <person name="Barrell B.G."/>
            <person name="Ferraz C."/>
            <person name="Vidal S."/>
            <person name="Brun C."/>
            <person name="Demailles J."/>
            <person name="Cadieu E."/>
            <person name="Dreano S."/>
            <person name="Gloux S."/>
            <person name="Lelaure V."/>
            <person name="Mottier S."/>
            <person name="Galibert F."/>
            <person name="Borkova D."/>
            <person name="Minana B."/>
            <person name="Kafatos F.C."/>
            <person name="Louis C."/>
            <person name="Siden-Kiamos I."/>
            <person name="Bolshakov S."/>
            <person name="Papagiannakis G."/>
            <person name="Spanos L."/>
            <person name="Cox S."/>
            <person name="Madueno E."/>
            <person name="de Pablos B."/>
            <person name="Modolell J."/>
            <person name="Peter A."/>
            <person name="Schoettler P."/>
            <person name="Werner M."/>
            <person name="Mourkioti F."/>
            <person name="Beinert N."/>
            <person name="Dowe G."/>
            <person name="Schaefer U."/>
            <person name="Jaeckle H."/>
            <person name="Bucheton A."/>
            <person name="Callister D.M."/>
            <person name="Campbell L.A."/>
            <person name="Darlamitsou A."/>
            <person name="Henderson N.S."/>
            <person name="McMillan P.J."/>
            <person name="Salles C."/>
            <person name="Tait E.A."/>
            <person name="Valenti P."/>
            <person name="Saunders R.D.C."/>
            <person name="Glover D.M."/>
        </authorList>
    </citation>
    <scope>NUCLEOTIDE SEQUENCE [LARGE SCALE GENOMIC DNA]</scope>
    <source>
        <strain>Oregon-R</strain>
    </source>
</reference>
<reference key="4">
    <citation type="journal article" date="2001" name="Curr. Biol.">
        <title>Spatially restricted expression of candidate taste receptors in the Drosophila gustatory system.</title>
        <authorList>
            <person name="Dunipace L."/>
            <person name="Meister S."/>
            <person name="McNealy C."/>
            <person name="Amrein H."/>
        </authorList>
    </citation>
    <scope>IDENTIFICATION</scope>
</reference>
<reference key="5">
    <citation type="journal article" date="2011" name="J. Neurosci.">
        <title>Molecular and cellular organization of the taste system in the Drosophila larva.</title>
        <authorList>
            <person name="Kwon J.Y."/>
            <person name="Dahanukar A."/>
            <person name="Weiss L.A."/>
            <person name="Carlson J.R."/>
        </authorList>
    </citation>
    <scope>TISSUE SPECIFICITY</scope>
</reference>
<feature type="chain" id="PRO_0000216487" description="Putative gustatory receptor 2a">
    <location>
        <begin position="1"/>
        <end position="428"/>
    </location>
</feature>
<feature type="topological domain" description="Cytoplasmic" evidence="1">
    <location>
        <begin position="1"/>
        <end position="40"/>
    </location>
</feature>
<feature type="transmembrane region" description="Helical; Name=1" evidence="2">
    <location>
        <begin position="41"/>
        <end position="61"/>
    </location>
</feature>
<feature type="topological domain" description="Extracellular" evidence="1">
    <location>
        <begin position="62"/>
        <end position="145"/>
    </location>
</feature>
<feature type="transmembrane region" description="Helical; Name=2" evidence="2">
    <location>
        <begin position="146"/>
        <end position="166"/>
    </location>
</feature>
<feature type="topological domain" description="Cytoplasmic" evidence="1">
    <location>
        <begin position="167"/>
        <end position="173"/>
    </location>
</feature>
<feature type="transmembrane region" description="Helical; Name=3" evidence="2">
    <location>
        <begin position="174"/>
        <end position="194"/>
    </location>
</feature>
<feature type="topological domain" description="Extracellular" evidence="1">
    <location>
        <begin position="195"/>
        <end position="250"/>
    </location>
</feature>
<feature type="transmembrane region" description="Helical; Name=4" evidence="2">
    <location>
        <begin position="251"/>
        <end position="271"/>
    </location>
</feature>
<feature type="topological domain" description="Cytoplasmic" evidence="1">
    <location>
        <begin position="272"/>
        <end position="300"/>
    </location>
</feature>
<feature type="transmembrane region" description="Helical; Name=5" evidence="2">
    <location>
        <begin position="301"/>
        <end position="321"/>
    </location>
</feature>
<feature type="topological domain" description="Extracellular" evidence="1">
    <location>
        <begin position="322"/>
        <end position="349"/>
    </location>
</feature>
<feature type="transmembrane region" description="Helical; Name=6" evidence="2">
    <location>
        <begin position="350"/>
        <end position="370"/>
    </location>
</feature>
<feature type="topological domain" description="Cytoplasmic" evidence="1">
    <location>
        <begin position="371"/>
        <end position="395"/>
    </location>
</feature>
<feature type="transmembrane region" description="Helical; Name=7" evidence="2">
    <location>
        <begin position="396"/>
        <end position="416"/>
    </location>
</feature>
<feature type="topological domain" description="Extracellular" evidence="1">
    <location>
        <begin position="417"/>
        <end position="428"/>
    </location>
</feature>
<feature type="glycosylation site" description="N-linked (GlcNAc...) asparagine" evidence="2">
    <location>
        <position position="195"/>
    </location>
</feature>
<feature type="glycosylation site" description="N-linked (GlcNAc...) asparagine" evidence="2">
    <location>
        <position position="345"/>
    </location>
</feature>
<feature type="splice variant" id="VSP_037656" description="In isoform B." evidence="4">
    <location>
        <begin position="352"/>
        <end position="369"/>
    </location>
</feature>
<accession>Q9W594</accession>
<comment type="function">
    <text evidence="1">Probable gustatory receptor which mediates acceptance or avoidance behavior, depending on its not yet determined substrates.</text>
</comment>
<comment type="subcellular location">
    <subcellularLocation>
        <location evidence="1">Cell membrane</location>
        <topology evidence="1">Multi-pass membrane protein</topology>
    </subcellularLocation>
</comment>
<comment type="alternative products">
    <event type="alternative splicing"/>
    <isoform>
        <id>Q9W594-1</id>
        <name>C</name>
        <sequence type="displayed"/>
    </isoform>
    <isoform>
        <id>Q9W594-2</id>
        <name>B</name>
        <sequence type="described" ref="VSP_037656"/>
    </isoform>
</comment>
<comment type="tissue specificity">
    <text evidence="3">Expressed in neurons of the terminal external chemosensory organ, the dorsal external chemosensory organ, as well as in the dorsal pharyngeal sense organ of larvae.</text>
</comment>
<comment type="similarity">
    <text evidence="4">Belongs to the insect chemoreceptor superfamily. Gustatory receptor (GR) family. Gr2a subfamily.</text>
</comment>
<keyword id="KW-0025">Alternative splicing</keyword>
<keyword id="KW-1003">Cell membrane</keyword>
<keyword id="KW-0325">Glycoprotein</keyword>
<keyword id="KW-0472">Membrane</keyword>
<keyword id="KW-0675">Receptor</keyword>
<keyword id="KW-1185">Reference proteome</keyword>
<keyword id="KW-0807">Transducer</keyword>
<keyword id="KW-0812">Transmembrane</keyword>
<keyword id="KW-1133">Transmembrane helix</keyword>
<proteinExistence type="evidence at transcript level"/>
<protein>
    <recommendedName>
        <fullName>Putative gustatory receptor 2a</fullName>
    </recommendedName>
</protein>
<sequence>MDTLRALEPLHRACQVCNLWPWRLAPPPDSEGILLRRSRWLELYGWTVLIAATSFTVYGLFQESSVEEKQDSESTISSIGHTVDFIQLVGMRVAHLAALLEALWQRQAQRGFFAELGEIDRLLSKALRVDVEAMRINMRRQTSRRAVWILWGYAVSQLLILGAKLLSRGDRFPIYWISYLLPLLVCGLRYFQIFNATQLVRQRLDVLLVALQQLQLHQKGPAVDTVLEEQEDLEEAAMDRLIAVRLVYQRVWALVALLNRCYGLSMLMQVGNDFLAITSNCYWMFLNFRQSAASPFDILQIVASGVWSAPHLGNVLVLSLLCDRTAQCASRLALCLHQVSVDLRNESHNALVGTLVRYCAPLIILVPLQITQFSLQLLHQRLHFSAAGFFNVDCTLLYTIVGATTTYLIILIQFHMSESTIGSDSNGQ</sequence>